<evidence type="ECO:0000255" key="1">
    <source>
        <dbReference type="HAMAP-Rule" id="MF_01632"/>
    </source>
</evidence>
<dbReference type="EC" id="4.1.3.40" evidence="1"/>
<dbReference type="EMBL" id="AE015451">
    <property type="protein sequence ID" value="AAN70882.1"/>
    <property type="molecule type" value="Genomic_DNA"/>
</dbReference>
<dbReference type="RefSeq" id="NP_747418.1">
    <property type="nucleotide sequence ID" value="NC_002947.4"/>
</dbReference>
<dbReference type="RefSeq" id="WP_010955810.1">
    <property type="nucleotide sequence ID" value="NZ_CP169744.1"/>
</dbReference>
<dbReference type="SMR" id="Q88C66"/>
<dbReference type="STRING" id="160488.PP_5317"/>
<dbReference type="PaxDb" id="160488-PP_5317"/>
<dbReference type="KEGG" id="ppu:PP_5317"/>
<dbReference type="PATRIC" id="fig|160488.4.peg.5669"/>
<dbReference type="eggNOG" id="COG3161">
    <property type="taxonomic scope" value="Bacteria"/>
</dbReference>
<dbReference type="HOGENOM" id="CLU_096824_3_0_6"/>
<dbReference type="OrthoDB" id="9789493at2"/>
<dbReference type="PhylomeDB" id="Q88C66"/>
<dbReference type="BioCyc" id="PPUT160488:G1G01-5673-MONOMER"/>
<dbReference type="UniPathway" id="UPA00232"/>
<dbReference type="Proteomes" id="UP000000556">
    <property type="component" value="Chromosome"/>
</dbReference>
<dbReference type="GO" id="GO:0005829">
    <property type="term" value="C:cytosol"/>
    <property type="evidence" value="ECO:0007669"/>
    <property type="project" value="TreeGrafter"/>
</dbReference>
<dbReference type="GO" id="GO:0008813">
    <property type="term" value="F:chorismate lyase activity"/>
    <property type="evidence" value="ECO:0007669"/>
    <property type="project" value="UniProtKB-UniRule"/>
</dbReference>
<dbReference type="GO" id="GO:0042866">
    <property type="term" value="P:pyruvate biosynthetic process"/>
    <property type="evidence" value="ECO:0007669"/>
    <property type="project" value="UniProtKB-UniRule"/>
</dbReference>
<dbReference type="GO" id="GO:0006744">
    <property type="term" value="P:ubiquinone biosynthetic process"/>
    <property type="evidence" value="ECO:0007669"/>
    <property type="project" value="UniProtKB-UniRule"/>
</dbReference>
<dbReference type="Gene3D" id="3.40.1410.10">
    <property type="entry name" value="Chorismate lyase-like"/>
    <property type="match status" value="1"/>
</dbReference>
<dbReference type="HAMAP" id="MF_01632">
    <property type="entry name" value="UbiC"/>
    <property type="match status" value="1"/>
</dbReference>
<dbReference type="InterPro" id="IPR007440">
    <property type="entry name" value="Chorismate--pyruvate_lyase"/>
</dbReference>
<dbReference type="InterPro" id="IPR028978">
    <property type="entry name" value="Chorismate_lyase_/UTRA_dom_sf"/>
</dbReference>
<dbReference type="PANTHER" id="PTHR38683">
    <property type="entry name" value="CHORISMATE PYRUVATE-LYASE"/>
    <property type="match status" value="1"/>
</dbReference>
<dbReference type="PANTHER" id="PTHR38683:SF1">
    <property type="entry name" value="CHORISMATE PYRUVATE-LYASE"/>
    <property type="match status" value="1"/>
</dbReference>
<dbReference type="Pfam" id="PF04345">
    <property type="entry name" value="Chor_lyase"/>
    <property type="match status" value="1"/>
</dbReference>
<dbReference type="SUPFAM" id="SSF64288">
    <property type="entry name" value="Chorismate lyase-like"/>
    <property type="match status" value="1"/>
</dbReference>
<proteinExistence type="inferred from homology"/>
<keyword id="KW-0963">Cytoplasm</keyword>
<keyword id="KW-0456">Lyase</keyword>
<keyword id="KW-0670">Pyruvate</keyword>
<keyword id="KW-1185">Reference proteome</keyword>
<keyword id="KW-0831">Ubiquinone biosynthesis</keyword>
<accession>Q88C66</accession>
<protein>
    <recommendedName>
        <fullName evidence="1">Probable chorismate pyruvate-lyase</fullName>
        <shortName evidence="1">CL</shortName>
        <shortName evidence="1">CPL</shortName>
        <ecNumber evidence="1">4.1.3.40</ecNumber>
    </recommendedName>
</protein>
<gene>
    <name evidence="1" type="primary">ubiC</name>
    <name type="ordered locus">PP_5317</name>
</gene>
<organism>
    <name type="scientific">Pseudomonas putida (strain ATCC 47054 / DSM 6125 / CFBP 8728 / NCIMB 11950 / KT2440)</name>
    <dbReference type="NCBI Taxonomy" id="160488"/>
    <lineage>
        <taxon>Bacteria</taxon>
        <taxon>Pseudomonadati</taxon>
        <taxon>Pseudomonadota</taxon>
        <taxon>Gammaproteobacteria</taxon>
        <taxon>Pseudomonadales</taxon>
        <taxon>Pseudomonadaceae</taxon>
        <taxon>Pseudomonas</taxon>
    </lineage>
</organism>
<feature type="chain" id="PRO_0000240560" description="Probable chorismate pyruvate-lyase">
    <location>
        <begin position="1"/>
        <end position="185"/>
    </location>
</feature>
<feature type="binding site" evidence="1">
    <location>
        <position position="80"/>
    </location>
    <ligand>
        <name>substrate</name>
    </ligand>
</feature>
<feature type="binding site" evidence="1">
    <location>
        <position position="118"/>
    </location>
    <ligand>
        <name>substrate</name>
    </ligand>
</feature>
<feature type="binding site" evidence="1">
    <location>
        <position position="170"/>
    </location>
    <ligand>
        <name>substrate</name>
    </ligand>
</feature>
<reference key="1">
    <citation type="journal article" date="2002" name="Environ. Microbiol.">
        <title>Complete genome sequence and comparative analysis of the metabolically versatile Pseudomonas putida KT2440.</title>
        <authorList>
            <person name="Nelson K.E."/>
            <person name="Weinel C."/>
            <person name="Paulsen I.T."/>
            <person name="Dodson R.J."/>
            <person name="Hilbert H."/>
            <person name="Martins dos Santos V.A.P."/>
            <person name="Fouts D.E."/>
            <person name="Gill S.R."/>
            <person name="Pop M."/>
            <person name="Holmes M."/>
            <person name="Brinkac L.M."/>
            <person name="Beanan M.J."/>
            <person name="DeBoy R.T."/>
            <person name="Daugherty S.C."/>
            <person name="Kolonay J.F."/>
            <person name="Madupu R."/>
            <person name="Nelson W.C."/>
            <person name="White O."/>
            <person name="Peterson J.D."/>
            <person name="Khouri H.M."/>
            <person name="Hance I."/>
            <person name="Chris Lee P."/>
            <person name="Holtzapple E.K."/>
            <person name="Scanlan D."/>
            <person name="Tran K."/>
            <person name="Moazzez A."/>
            <person name="Utterback T.R."/>
            <person name="Rizzo M."/>
            <person name="Lee K."/>
            <person name="Kosack D."/>
            <person name="Moestl D."/>
            <person name="Wedler H."/>
            <person name="Lauber J."/>
            <person name="Stjepandic D."/>
            <person name="Hoheisel J."/>
            <person name="Straetz M."/>
            <person name="Heim S."/>
            <person name="Kiewitz C."/>
            <person name="Eisen J.A."/>
            <person name="Timmis K.N."/>
            <person name="Duesterhoeft A."/>
            <person name="Tuemmler B."/>
            <person name="Fraser C.M."/>
        </authorList>
    </citation>
    <scope>NUCLEOTIDE SEQUENCE [LARGE SCALE GENOMIC DNA]</scope>
    <source>
        <strain>ATCC 47054 / DSM 6125 / CFBP 8728 / NCIMB 11950 / KT2440</strain>
    </source>
</reference>
<comment type="function">
    <text evidence="1">Removes the pyruvyl group from chorismate, with concomitant aromatization of the ring, to provide 4-hydroxybenzoate (4HB) for the ubiquinone pathway.</text>
</comment>
<comment type="catalytic activity">
    <reaction evidence="1">
        <text>chorismate = 4-hydroxybenzoate + pyruvate</text>
        <dbReference type="Rhea" id="RHEA:16505"/>
        <dbReference type="ChEBI" id="CHEBI:15361"/>
        <dbReference type="ChEBI" id="CHEBI:17879"/>
        <dbReference type="ChEBI" id="CHEBI:29748"/>
        <dbReference type="EC" id="4.1.3.40"/>
    </reaction>
</comment>
<comment type="pathway">
    <text evidence="1">Cofactor biosynthesis; ubiquinone biosynthesis.</text>
</comment>
<comment type="subcellular location">
    <subcellularLocation>
        <location evidence="1">Cytoplasm</location>
    </subcellularLocation>
</comment>
<comment type="similarity">
    <text evidence="1">Belongs to the UbiC family.</text>
</comment>
<sequence length="185" mass="20826">MSYESPQAAAVAWLPYSQLATDIDQPTLDWLFDEGSLTRRLTRLSIDHFSVTPLFEGWQPLRDDECQALGIAAGAEGWVREVYLRGHGQPWVFARSVASRSALERGGLDLETLGSRSLGELLFCDQAFIRHPLEVCTYPQAWLPSEAAHAALWGRRSRFERNGLDLLVAEVFLPALWQAAKEENR</sequence>
<name>UBIC_PSEPK</name>